<gene>
    <name evidence="2" type="primary">rpsL</name>
    <name type="ordered locus">ECH_0963</name>
</gene>
<keyword id="KW-0488">Methylation</keyword>
<keyword id="KW-1185">Reference proteome</keyword>
<keyword id="KW-0687">Ribonucleoprotein</keyword>
<keyword id="KW-0689">Ribosomal protein</keyword>
<keyword id="KW-0694">RNA-binding</keyword>
<keyword id="KW-0699">rRNA-binding</keyword>
<keyword id="KW-0820">tRNA-binding</keyword>
<sequence>MPTINQLVRKPRKSRSSLNKAPALQHNPQKRAVCVKVYTTTPKKPNSALRKVARVKIAGYGSEVIAYIPGEGHNLQEHSVILIRGGRVKDLPGVRYHIIRGALDSRGVQNRKKARSKYGVKKS</sequence>
<protein>
    <recommendedName>
        <fullName evidence="2">Small ribosomal subunit protein uS12</fullName>
    </recommendedName>
    <alternativeName>
        <fullName evidence="4">30S ribosomal protein S12</fullName>
    </alternativeName>
</protein>
<organism>
    <name type="scientific">Ehrlichia chaffeensis (strain ATCC CRL-10679 / Arkansas)</name>
    <dbReference type="NCBI Taxonomy" id="205920"/>
    <lineage>
        <taxon>Bacteria</taxon>
        <taxon>Pseudomonadati</taxon>
        <taxon>Pseudomonadota</taxon>
        <taxon>Alphaproteobacteria</taxon>
        <taxon>Rickettsiales</taxon>
        <taxon>Anaplasmataceae</taxon>
        <taxon>Ehrlichia</taxon>
    </lineage>
</organism>
<reference key="1">
    <citation type="journal article" date="2006" name="PLoS Genet.">
        <title>Comparative genomics of emerging human ehrlichiosis agents.</title>
        <authorList>
            <person name="Dunning Hotopp J.C."/>
            <person name="Lin M."/>
            <person name="Madupu R."/>
            <person name="Crabtree J."/>
            <person name="Angiuoli S.V."/>
            <person name="Eisen J.A."/>
            <person name="Seshadri R."/>
            <person name="Ren Q."/>
            <person name="Wu M."/>
            <person name="Utterback T.R."/>
            <person name="Smith S."/>
            <person name="Lewis M."/>
            <person name="Khouri H."/>
            <person name="Zhang C."/>
            <person name="Niu H."/>
            <person name="Lin Q."/>
            <person name="Ohashi N."/>
            <person name="Zhi N."/>
            <person name="Nelson W.C."/>
            <person name="Brinkac L.M."/>
            <person name="Dodson R.J."/>
            <person name="Rosovitz M.J."/>
            <person name="Sundaram J.P."/>
            <person name="Daugherty S.C."/>
            <person name="Davidsen T."/>
            <person name="Durkin A.S."/>
            <person name="Gwinn M.L."/>
            <person name="Haft D.H."/>
            <person name="Selengut J.D."/>
            <person name="Sullivan S.A."/>
            <person name="Zafar N."/>
            <person name="Zhou L."/>
            <person name="Benahmed F."/>
            <person name="Forberger H."/>
            <person name="Halpin R."/>
            <person name="Mulligan S."/>
            <person name="Robinson J."/>
            <person name="White O."/>
            <person name="Rikihisa Y."/>
            <person name="Tettelin H."/>
        </authorList>
    </citation>
    <scope>NUCLEOTIDE SEQUENCE [LARGE SCALE GENOMIC DNA]</scope>
    <source>
        <strain>ATCC CRL-10679 / Arkansas</strain>
    </source>
</reference>
<accession>Q2GFN3</accession>
<feature type="chain" id="PRO_0000295973" description="Small ribosomal subunit protein uS12">
    <location>
        <begin position="1"/>
        <end position="123"/>
    </location>
</feature>
<feature type="region of interest" description="Disordered" evidence="3">
    <location>
        <begin position="1"/>
        <end position="26"/>
    </location>
</feature>
<feature type="modified residue" description="3-methylthioaspartic acid" evidence="1">
    <location>
        <position position="90"/>
    </location>
</feature>
<comment type="function">
    <text evidence="2">With S4 and S5 plays an important role in translational accuracy.</text>
</comment>
<comment type="function">
    <text evidence="2">Interacts with and stabilizes bases of the 16S rRNA that are involved in tRNA selection in the A site and with the mRNA backbone. Located at the interface of the 30S and 50S subunits, it traverses the body of the 30S subunit contacting proteins on the other side and probably holding the rRNA structure together. The combined cluster of proteins S8, S12 and S17 appears to hold together the shoulder and platform of the 30S subunit.</text>
</comment>
<comment type="subunit">
    <text evidence="2">Part of the 30S ribosomal subunit. Contacts proteins S8 and S17. May interact with IF1 in the 30S initiation complex.</text>
</comment>
<comment type="similarity">
    <text evidence="2">Belongs to the universal ribosomal protein uS12 family.</text>
</comment>
<name>RS12_EHRCR</name>
<evidence type="ECO:0000250" key="1"/>
<evidence type="ECO:0000255" key="2">
    <source>
        <dbReference type="HAMAP-Rule" id="MF_00403"/>
    </source>
</evidence>
<evidence type="ECO:0000256" key="3">
    <source>
        <dbReference type="SAM" id="MobiDB-lite"/>
    </source>
</evidence>
<evidence type="ECO:0000305" key="4"/>
<dbReference type="EMBL" id="CP000236">
    <property type="protein sequence ID" value="ABD44798.1"/>
    <property type="molecule type" value="Genomic_DNA"/>
</dbReference>
<dbReference type="RefSeq" id="WP_006010363.1">
    <property type="nucleotide sequence ID" value="NC_007799.1"/>
</dbReference>
<dbReference type="SMR" id="Q2GFN3"/>
<dbReference type="STRING" id="205920.ECH_0963"/>
<dbReference type="KEGG" id="ech:ECH_0963"/>
<dbReference type="eggNOG" id="COG0048">
    <property type="taxonomic scope" value="Bacteria"/>
</dbReference>
<dbReference type="HOGENOM" id="CLU_104295_1_2_5"/>
<dbReference type="OrthoDB" id="9802366at2"/>
<dbReference type="Proteomes" id="UP000008320">
    <property type="component" value="Chromosome"/>
</dbReference>
<dbReference type="GO" id="GO:0015935">
    <property type="term" value="C:small ribosomal subunit"/>
    <property type="evidence" value="ECO:0007669"/>
    <property type="project" value="InterPro"/>
</dbReference>
<dbReference type="GO" id="GO:0019843">
    <property type="term" value="F:rRNA binding"/>
    <property type="evidence" value="ECO:0007669"/>
    <property type="project" value="UniProtKB-UniRule"/>
</dbReference>
<dbReference type="GO" id="GO:0003735">
    <property type="term" value="F:structural constituent of ribosome"/>
    <property type="evidence" value="ECO:0007669"/>
    <property type="project" value="InterPro"/>
</dbReference>
<dbReference type="GO" id="GO:0000049">
    <property type="term" value="F:tRNA binding"/>
    <property type="evidence" value="ECO:0007669"/>
    <property type="project" value="UniProtKB-UniRule"/>
</dbReference>
<dbReference type="GO" id="GO:0006412">
    <property type="term" value="P:translation"/>
    <property type="evidence" value="ECO:0007669"/>
    <property type="project" value="UniProtKB-UniRule"/>
</dbReference>
<dbReference type="CDD" id="cd03368">
    <property type="entry name" value="Ribosomal_S12"/>
    <property type="match status" value="1"/>
</dbReference>
<dbReference type="FunFam" id="2.40.50.140:FF:000001">
    <property type="entry name" value="30S ribosomal protein S12"/>
    <property type="match status" value="1"/>
</dbReference>
<dbReference type="Gene3D" id="2.40.50.140">
    <property type="entry name" value="Nucleic acid-binding proteins"/>
    <property type="match status" value="1"/>
</dbReference>
<dbReference type="HAMAP" id="MF_00403_B">
    <property type="entry name" value="Ribosomal_uS12_B"/>
    <property type="match status" value="1"/>
</dbReference>
<dbReference type="InterPro" id="IPR012340">
    <property type="entry name" value="NA-bd_OB-fold"/>
</dbReference>
<dbReference type="InterPro" id="IPR006032">
    <property type="entry name" value="Ribosomal_uS12"/>
</dbReference>
<dbReference type="InterPro" id="IPR005679">
    <property type="entry name" value="Ribosomal_uS12_bac"/>
</dbReference>
<dbReference type="NCBIfam" id="TIGR00981">
    <property type="entry name" value="rpsL_bact"/>
    <property type="match status" value="1"/>
</dbReference>
<dbReference type="PANTHER" id="PTHR11652">
    <property type="entry name" value="30S RIBOSOMAL PROTEIN S12 FAMILY MEMBER"/>
    <property type="match status" value="1"/>
</dbReference>
<dbReference type="Pfam" id="PF00164">
    <property type="entry name" value="Ribosom_S12_S23"/>
    <property type="match status" value="1"/>
</dbReference>
<dbReference type="PIRSF" id="PIRSF002133">
    <property type="entry name" value="Ribosomal_S12/S23"/>
    <property type="match status" value="1"/>
</dbReference>
<dbReference type="PRINTS" id="PR01034">
    <property type="entry name" value="RIBOSOMALS12"/>
</dbReference>
<dbReference type="SUPFAM" id="SSF50249">
    <property type="entry name" value="Nucleic acid-binding proteins"/>
    <property type="match status" value="1"/>
</dbReference>
<dbReference type="PROSITE" id="PS00055">
    <property type="entry name" value="RIBOSOMAL_S12"/>
    <property type="match status" value="1"/>
</dbReference>
<proteinExistence type="inferred from homology"/>